<sequence length="193" mass="21713">MSSPIDIVEKKLLSDHWFILHKYVFDLKRKNGGVVRQIREVYDRGDGATILLYNRAKGTVILTRQFRIPTYVNGNESGMLLEACAGLLDDYSPEECIRNEAIEETGYAVGNVEKLFDAYMSPGGVTERLHFFAAEYDESLRDNSGGGVEDEDIEVLELPFSEAIAMMNDGRIKDGKTIMLLQHAIIRGWFAKG</sequence>
<accession>Q6D8X4</accession>
<protein>
    <recommendedName>
        <fullName>GDP-mannose pyrophosphatase</fullName>
        <ecNumber evidence="1">3.6.1.-</ecNumber>
    </recommendedName>
    <alternativeName>
        <fullName>GDP-mannose hydrolase</fullName>
    </alternativeName>
    <alternativeName>
        <fullName>GDPMK</fullName>
    </alternativeName>
</protein>
<evidence type="ECO:0000250" key="1">
    <source>
        <dbReference type="UniProtKB" id="P37128"/>
    </source>
</evidence>
<evidence type="ECO:0000255" key="2">
    <source>
        <dbReference type="PROSITE-ProRule" id="PRU00794"/>
    </source>
</evidence>
<evidence type="ECO:0000305" key="3"/>
<name>NUDK_PECAS</name>
<proteinExistence type="inferred from homology"/>
<organism>
    <name type="scientific">Pectobacterium atrosepticum (strain SCRI 1043 / ATCC BAA-672)</name>
    <name type="common">Erwinia carotovora subsp. atroseptica</name>
    <dbReference type="NCBI Taxonomy" id="218491"/>
    <lineage>
        <taxon>Bacteria</taxon>
        <taxon>Pseudomonadati</taxon>
        <taxon>Pseudomonadota</taxon>
        <taxon>Gammaproteobacteria</taxon>
        <taxon>Enterobacterales</taxon>
        <taxon>Pectobacteriaceae</taxon>
        <taxon>Pectobacterium</taxon>
    </lineage>
</organism>
<reference key="1">
    <citation type="journal article" date="2004" name="Proc. Natl. Acad. Sci. U.S.A.">
        <title>Genome sequence of the enterobacterial phytopathogen Erwinia carotovora subsp. atroseptica and characterization of virulence factors.</title>
        <authorList>
            <person name="Bell K.S."/>
            <person name="Sebaihia M."/>
            <person name="Pritchard L."/>
            <person name="Holden M.T.G."/>
            <person name="Hyman L.J."/>
            <person name="Holeva M.C."/>
            <person name="Thomson N.R."/>
            <person name="Bentley S.D."/>
            <person name="Churcher L.J.C."/>
            <person name="Mungall K."/>
            <person name="Atkin R."/>
            <person name="Bason N."/>
            <person name="Brooks K."/>
            <person name="Chillingworth T."/>
            <person name="Clark K."/>
            <person name="Doggett J."/>
            <person name="Fraser A."/>
            <person name="Hance Z."/>
            <person name="Hauser H."/>
            <person name="Jagels K."/>
            <person name="Moule S."/>
            <person name="Norbertczak H."/>
            <person name="Ormond D."/>
            <person name="Price C."/>
            <person name="Quail M.A."/>
            <person name="Sanders M."/>
            <person name="Walker D."/>
            <person name="Whitehead S."/>
            <person name="Salmond G.P.C."/>
            <person name="Birch P.R.J."/>
            <person name="Parkhill J."/>
            <person name="Toth I.K."/>
        </authorList>
    </citation>
    <scope>NUCLEOTIDE SEQUENCE [LARGE SCALE GENOMIC DNA]</scope>
    <source>
        <strain>SCRI 1043 / ATCC BAA-672</strain>
    </source>
</reference>
<feature type="chain" id="PRO_0000342481" description="GDP-mannose pyrophosphatase">
    <location>
        <begin position="1"/>
        <end position="193"/>
    </location>
</feature>
<feature type="domain" description="Nudix hydrolase" evidence="2">
    <location>
        <begin position="43"/>
        <end position="180"/>
    </location>
</feature>
<feature type="short sequence motif" description="Nudix box">
    <location>
        <begin position="86"/>
        <end position="106"/>
    </location>
</feature>
<feature type="binding site" evidence="1">
    <location>
        <begin position="38"/>
        <end position="40"/>
    </location>
    <ligand>
        <name>GDP-alpha-D-mannose</name>
        <dbReference type="ChEBI" id="CHEBI:57527"/>
        <note>ligand shared between dimeric partners</note>
    </ligand>
</feature>
<feature type="binding site" description="in other chain" evidence="1">
    <location>
        <position position="67"/>
    </location>
    <ligand>
        <name>GDP-alpha-D-mannose</name>
        <dbReference type="ChEBI" id="CHEBI:57527"/>
        <note>ligand shared between dimeric partners</note>
    </ligand>
</feature>
<feature type="binding site" description="in other chain" evidence="1">
    <location>
        <begin position="85"/>
        <end position="87"/>
    </location>
    <ligand>
        <name>GDP-alpha-D-mannose</name>
        <dbReference type="ChEBI" id="CHEBI:57527"/>
        <note>ligand shared between dimeric partners</note>
    </ligand>
</feature>
<feature type="binding site" evidence="1">
    <location>
        <position position="85"/>
    </location>
    <ligand>
        <name>Mg(2+)</name>
        <dbReference type="ChEBI" id="CHEBI:18420"/>
        <label>1</label>
    </ligand>
</feature>
<feature type="binding site" evidence="1">
    <location>
        <position position="100"/>
    </location>
    <ligand>
        <name>Mg(2+)</name>
        <dbReference type="ChEBI" id="CHEBI:18420"/>
        <label>2</label>
    </ligand>
</feature>
<feature type="binding site" description="in other chain" evidence="1">
    <location>
        <position position="104"/>
    </location>
    <ligand>
        <name>GDP-alpha-D-mannose</name>
        <dbReference type="ChEBI" id="CHEBI:57527"/>
        <note>ligand shared between dimeric partners</note>
    </ligand>
</feature>
<feature type="binding site" evidence="1">
    <location>
        <position position="104"/>
    </location>
    <ligand>
        <name>Mg(2+)</name>
        <dbReference type="ChEBI" id="CHEBI:18420"/>
        <label>1</label>
    </ligand>
</feature>
<feature type="binding site" evidence="1">
    <location>
        <position position="104"/>
    </location>
    <ligand>
        <name>Mg(2+)</name>
        <dbReference type="ChEBI" id="CHEBI:18420"/>
        <label>2</label>
    </ligand>
</feature>
<feature type="binding site" description="in other chain" evidence="1">
    <location>
        <position position="127"/>
    </location>
    <ligand>
        <name>GDP-alpha-D-mannose</name>
        <dbReference type="ChEBI" id="CHEBI:57527"/>
        <note>ligand shared between dimeric partners</note>
    </ligand>
</feature>
<feature type="binding site" description="in other chain" evidence="1">
    <location>
        <begin position="150"/>
        <end position="151"/>
    </location>
    <ligand>
        <name>GDP-alpha-D-mannose</name>
        <dbReference type="ChEBI" id="CHEBI:57527"/>
        <note>ligand shared between dimeric partners</note>
    </ligand>
</feature>
<feature type="binding site" evidence="1">
    <location>
        <position position="151"/>
    </location>
    <ligand>
        <name>Mg(2+)</name>
        <dbReference type="ChEBI" id="CHEBI:18420"/>
        <label>2</label>
    </ligand>
</feature>
<feature type="binding site" description="in other chain" evidence="1">
    <location>
        <position position="176"/>
    </location>
    <ligand>
        <name>GDP-alpha-D-mannose</name>
        <dbReference type="ChEBI" id="CHEBI:57527"/>
        <note>ligand shared between dimeric partners</note>
    </ligand>
</feature>
<dbReference type="EC" id="3.6.1.-" evidence="1"/>
<dbReference type="EMBL" id="BX950851">
    <property type="protein sequence ID" value="CAG73760.1"/>
    <property type="molecule type" value="Genomic_DNA"/>
</dbReference>
<dbReference type="RefSeq" id="WP_011092451.1">
    <property type="nucleotide sequence ID" value="NC_004547.2"/>
</dbReference>
<dbReference type="SMR" id="Q6D8X4"/>
<dbReference type="STRING" id="218491.ECA0847"/>
<dbReference type="GeneID" id="57207592"/>
<dbReference type="KEGG" id="eca:ECA0847"/>
<dbReference type="PATRIC" id="fig|218491.5.peg.848"/>
<dbReference type="eggNOG" id="COG0494">
    <property type="taxonomic scope" value="Bacteria"/>
</dbReference>
<dbReference type="HOGENOM" id="CLU_062658_6_0_6"/>
<dbReference type="OrthoDB" id="5292471at2"/>
<dbReference type="Proteomes" id="UP000007966">
    <property type="component" value="Chromosome"/>
</dbReference>
<dbReference type="GO" id="GO:0005829">
    <property type="term" value="C:cytosol"/>
    <property type="evidence" value="ECO:0007669"/>
    <property type="project" value="TreeGrafter"/>
</dbReference>
<dbReference type="GO" id="GO:0016818">
    <property type="term" value="F:hydrolase activity, acting on acid anhydrides, in phosphorus-containing anhydrides"/>
    <property type="evidence" value="ECO:0007669"/>
    <property type="project" value="InterPro"/>
</dbReference>
<dbReference type="GO" id="GO:0046872">
    <property type="term" value="F:metal ion binding"/>
    <property type="evidence" value="ECO:0007669"/>
    <property type="project" value="UniProtKB-KW"/>
</dbReference>
<dbReference type="GO" id="GO:0006753">
    <property type="term" value="P:nucleoside phosphate metabolic process"/>
    <property type="evidence" value="ECO:0007669"/>
    <property type="project" value="TreeGrafter"/>
</dbReference>
<dbReference type="GO" id="GO:0019693">
    <property type="term" value="P:ribose phosphate metabolic process"/>
    <property type="evidence" value="ECO:0007669"/>
    <property type="project" value="TreeGrafter"/>
</dbReference>
<dbReference type="CDD" id="cd24157">
    <property type="entry name" value="NUDIX_GDPMK"/>
    <property type="match status" value="1"/>
</dbReference>
<dbReference type="FunFam" id="3.90.79.10:FF:000010">
    <property type="entry name" value="GDP-mannose pyrophosphatase NudK"/>
    <property type="match status" value="1"/>
</dbReference>
<dbReference type="Gene3D" id="3.90.79.10">
    <property type="entry name" value="Nucleoside Triphosphate Pyrophosphohydrolase"/>
    <property type="match status" value="1"/>
</dbReference>
<dbReference type="InterPro" id="IPR004385">
    <property type="entry name" value="NDP_pyrophosphatase"/>
</dbReference>
<dbReference type="InterPro" id="IPR015797">
    <property type="entry name" value="NUDIX_hydrolase-like_dom_sf"/>
</dbReference>
<dbReference type="InterPro" id="IPR000086">
    <property type="entry name" value="NUDIX_hydrolase_dom"/>
</dbReference>
<dbReference type="NCBIfam" id="TIGR00052">
    <property type="entry name" value="nudix-type nucleoside diphosphatase, YffH/AdpP family"/>
    <property type="match status" value="1"/>
</dbReference>
<dbReference type="NCBIfam" id="NF011585">
    <property type="entry name" value="PRK15009.1"/>
    <property type="match status" value="1"/>
</dbReference>
<dbReference type="PANTHER" id="PTHR11839:SF18">
    <property type="entry name" value="NUDIX HYDROLASE DOMAIN-CONTAINING PROTEIN"/>
    <property type="match status" value="1"/>
</dbReference>
<dbReference type="PANTHER" id="PTHR11839">
    <property type="entry name" value="UDP/ADP-SUGAR PYROPHOSPHATASE"/>
    <property type="match status" value="1"/>
</dbReference>
<dbReference type="Pfam" id="PF00293">
    <property type="entry name" value="NUDIX"/>
    <property type="match status" value="1"/>
</dbReference>
<dbReference type="SUPFAM" id="SSF55811">
    <property type="entry name" value="Nudix"/>
    <property type="match status" value="1"/>
</dbReference>
<dbReference type="PROSITE" id="PS51462">
    <property type="entry name" value="NUDIX"/>
    <property type="match status" value="1"/>
</dbReference>
<comment type="function">
    <text evidence="1">Nucleoside diphosphate sugar hydrolase that hydrolyzes GDP-mannose as its preferred substrate, yielding GMP and mannose-1-phosphate.</text>
</comment>
<comment type="catalytic activity">
    <reaction evidence="1">
        <text>GDP-alpha-D-mannose + H2O = alpha-D-mannose 1-phosphate + GMP + 2 H(+)</text>
        <dbReference type="Rhea" id="RHEA:27978"/>
        <dbReference type="ChEBI" id="CHEBI:15377"/>
        <dbReference type="ChEBI" id="CHEBI:15378"/>
        <dbReference type="ChEBI" id="CHEBI:57527"/>
        <dbReference type="ChEBI" id="CHEBI:58115"/>
        <dbReference type="ChEBI" id="CHEBI:58409"/>
    </reaction>
</comment>
<comment type="cofactor">
    <cofactor evidence="1">
        <name>Mg(2+)</name>
        <dbReference type="ChEBI" id="CHEBI:18420"/>
    </cofactor>
</comment>
<comment type="subunit">
    <text evidence="1">Homodimer.</text>
</comment>
<comment type="domain">
    <text evidence="1">In the dimer, the N-terminal domains are swapped between the two monomers, such that residues of both chains contribute to the active site.</text>
</comment>
<comment type="similarity">
    <text evidence="3">Belongs to the Nudix hydrolase family. NudK subfamily.</text>
</comment>
<keyword id="KW-0378">Hydrolase</keyword>
<keyword id="KW-0460">Magnesium</keyword>
<keyword id="KW-0479">Metal-binding</keyword>
<keyword id="KW-1185">Reference proteome</keyword>
<gene>
    <name type="primary">nudK</name>
    <name type="ordered locus">ECA0847</name>
</gene>